<organism>
    <name type="scientific">Deinococcus deserti (strain DSM 17065 / CIP 109153 / LMG 22923 / VCD115)</name>
    <dbReference type="NCBI Taxonomy" id="546414"/>
    <lineage>
        <taxon>Bacteria</taxon>
        <taxon>Thermotogati</taxon>
        <taxon>Deinococcota</taxon>
        <taxon>Deinococci</taxon>
        <taxon>Deinococcales</taxon>
        <taxon>Deinococcaceae</taxon>
        <taxon>Deinococcus</taxon>
    </lineage>
</organism>
<name>RL13_DEIDV</name>
<dbReference type="EMBL" id="CP001114">
    <property type="protein sequence ID" value="ACO45590.1"/>
    <property type="molecule type" value="Genomic_DNA"/>
</dbReference>
<dbReference type="RefSeq" id="WP_012692713.1">
    <property type="nucleotide sequence ID" value="NC_012526.1"/>
</dbReference>
<dbReference type="SMR" id="C1D166"/>
<dbReference type="STRING" id="546414.Deide_07320"/>
<dbReference type="PaxDb" id="546414-Deide_07320"/>
<dbReference type="KEGG" id="ddr:Deide_07320"/>
<dbReference type="eggNOG" id="COG0102">
    <property type="taxonomic scope" value="Bacteria"/>
</dbReference>
<dbReference type="HOGENOM" id="CLU_082184_2_2_0"/>
<dbReference type="OrthoDB" id="9801330at2"/>
<dbReference type="Proteomes" id="UP000002208">
    <property type="component" value="Chromosome"/>
</dbReference>
<dbReference type="GO" id="GO:0022625">
    <property type="term" value="C:cytosolic large ribosomal subunit"/>
    <property type="evidence" value="ECO:0007669"/>
    <property type="project" value="TreeGrafter"/>
</dbReference>
<dbReference type="GO" id="GO:0003729">
    <property type="term" value="F:mRNA binding"/>
    <property type="evidence" value="ECO:0007669"/>
    <property type="project" value="TreeGrafter"/>
</dbReference>
<dbReference type="GO" id="GO:0003735">
    <property type="term" value="F:structural constituent of ribosome"/>
    <property type="evidence" value="ECO:0007669"/>
    <property type="project" value="InterPro"/>
</dbReference>
<dbReference type="GO" id="GO:0017148">
    <property type="term" value="P:negative regulation of translation"/>
    <property type="evidence" value="ECO:0007669"/>
    <property type="project" value="TreeGrafter"/>
</dbReference>
<dbReference type="GO" id="GO:0006412">
    <property type="term" value="P:translation"/>
    <property type="evidence" value="ECO:0007669"/>
    <property type="project" value="UniProtKB-UniRule"/>
</dbReference>
<dbReference type="CDD" id="cd00392">
    <property type="entry name" value="Ribosomal_L13"/>
    <property type="match status" value="1"/>
</dbReference>
<dbReference type="FunFam" id="3.90.1180.10:FF:000001">
    <property type="entry name" value="50S ribosomal protein L13"/>
    <property type="match status" value="1"/>
</dbReference>
<dbReference type="Gene3D" id="3.90.1180.10">
    <property type="entry name" value="Ribosomal protein L13"/>
    <property type="match status" value="1"/>
</dbReference>
<dbReference type="HAMAP" id="MF_01366">
    <property type="entry name" value="Ribosomal_uL13"/>
    <property type="match status" value="1"/>
</dbReference>
<dbReference type="InterPro" id="IPR005822">
    <property type="entry name" value="Ribosomal_uL13"/>
</dbReference>
<dbReference type="InterPro" id="IPR005823">
    <property type="entry name" value="Ribosomal_uL13_bac-type"/>
</dbReference>
<dbReference type="InterPro" id="IPR023563">
    <property type="entry name" value="Ribosomal_uL13_CS"/>
</dbReference>
<dbReference type="InterPro" id="IPR036899">
    <property type="entry name" value="Ribosomal_uL13_sf"/>
</dbReference>
<dbReference type="NCBIfam" id="TIGR01066">
    <property type="entry name" value="rplM_bact"/>
    <property type="match status" value="1"/>
</dbReference>
<dbReference type="PANTHER" id="PTHR11545:SF2">
    <property type="entry name" value="LARGE RIBOSOMAL SUBUNIT PROTEIN UL13M"/>
    <property type="match status" value="1"/>
</dbReference>
<dbReference type="PANTHER" id="PTHR11545">
    <property type="entry name" value="RIBOSOMAL PROTEIN L13"/>
    <property type="match status" value="1"/>
</dbReference>
<dbReference type="Pfam" id="PF00572">
    <property type="entry name" value="Ribosomal_L13"/>
    <property type="match status" value="1"/>
</dbReference>
<dbReference type="PIRSF" id="PIRSF002181">
    <property type="entry name" value="Ribosomal_L13"/>
    <property type="match status" value="1"/>
</dbReference>
<dbReference type="SUPFAM" id="SSF52161">
    <property type="entry name" value="Ribosomal protein L13"/>
    <property type="match status" value="1"/>
</dbReference>
<dbReference type="PROSITE" id="PS00783">
    <property type="entry name" value="RIBOSOMAL_L13"/>
    <property type="match status" value="1"/>
</dbReference>
<protein>
    <recommendedName>
        <fullName evidence="1">Large ribosomal subunit protein uL13</fullName>
    </recommendedName>
    <alternativeName>
        <fullName evidence="2">50S ribosomal protein L13</fullName>
    </alternativeName>
</protein>
<proteinExistence type="inferred from homology"/>
<comment type="function">
    <text evidence="1">This protein is one of the early assembly proteins of the 50S ribosomal subunit, although it is not seen to bind rRNA by itself. It is important during the early stages of 50S assembly.</text>
</comment>
<comment type="subunit">
    <text evidence="1">Part of the 50S ribosomal subunit.</text>
</comment>
<comment type="similarity">
    <text evidence="1">Belongs to the universal ribosomal protein uL13 family.</text>
</comment>
<keyword id="KW-1185">Reference proteome</keyword>
<keyword id="KW-0687">Ribonucleoprotein</keyword>
<keyword id="KW-0689">Ribosomal protein</keyword>
<gene>
    <name evidence="1" type="primary">rplM</name>
    <name type="ordered locus">Deide_07320</name>
</gene>
<feature type="chain" id="PRO_1000214945" description="Large ribosomal subunit protein uL13">
    <location>
        <begin position="1"/>
        <end position="141"/>
    </location>
</feature>
<accession>C1D166</accession>
<reference key="1">
    <citation type="journal article" date="2009" name="PLoS Genet.">
        <title>Alliance of proteomics and genomics to unravel the specificities of Sahara bacterium Deinococcus deserti.</title>
        <authorList>
            <person name="de Groot A."/>
            <person name="Dulermo R."/>
            <person name="Ortet P."/>
            <person name="Blanchard L."/>
            <person name="Guerin P."/>
            <person name="Fernandez B."/>
            <person name="Vacherie B."/>
            <person name="Dossat C."/>
            <person name="Jolivet E."/>
            <person name="Siguier P."/>
            <person name="Chandler M."/>
            <person name="Barakat M."/>
            <person name="Dedieu A."/>
            <person name="Barbe V."/>
            <person name="Heulin T."/>
            <person name="Sommer S."/>
            <person name="Achouak W."/>
            <person name="Armengaud J."/>
        </authorList>
    </citation>
    <scope>NUCLEOTIDE SEQUENCE [LARGE SCALE GENOMIC DNA]</scope>
    <source>
        <strain>DSM 17065 / CIP 109153 / LMG 22923 / VCD115</strain>
    </source>
</reference>
<evidence type="ECO:0000255" key="1">
    <source>
        <dbReference type="HAMAP-Rule" id="MF_01366"/>
    </source>
</evidence>
<evidence type="ECO:0000305" key="2"/>
<sequence length="141" mass="15766">MKTYIPKNDEQNWVVVDAAGVPLGRLATLIASRIRGKHRPDFTPNLIQGDFVVVLNAEKVALTGNKLDGKVYTRYTGYQGGLRTETAREALAKHPERVIEHAVFGMLPKGRQGRSMHNRLKVYAGETHPHTAQKPQTLEVR</sequence>